<evidence type="ECO:0000250" key="1"/>
<evidence type="ECO:0000255" key="2"/>
<evidence type="ECO:0000305" key="3"/>
<protein>
    <recommendedName>
        <fullName>Secretory carrier-associated membrane protein 5A</fullName>
        <shortName>Secretory carrier membrane protein 5 A</shortName>
    </recommendedName>
</protein>
<gene>
    <name type="primary">scamp5-a</name>
</gene>
<keyword id="KW-1003">Cell membrane</keyword>
<keyword id="KW-0968">Cytoplasmic vesicle</keyword>
<keyword id="KW-0967">Endosome</keyword>
<keyword id="KW-0268">Exocytosis</keyword>
<keyword id="KW-0333">Golgi apparatus</keyword>
<keyword id="KW-0472">Membrane</keyword>
<keyword id="KW-0653">Protein transport</keyword>
<keyword id="KW-1185">Reference proteome</keyword>
<keyword id="KW-0770">Synapse</keyword>
<keyword id="KW-0812">Transmembrane</keyword>
<keyword id="KW-1133">Transmembrane helix</keyword>
<keyword id="KW-0813">Transport</keyword>
<name>SCM5A_XENLA</name>
<accession>Q6GPA8</accession>
<organism>
    <name type="scientific">Xenopus laevis</name>
    <name type="common">African clawed frog</name>
    <dbReference type="NCBI Taxonomy" id="8355"/>
    <lineage>
        <taxon>Eukaryota</taxon>
        <taxon>Metazoa</taxon>
        <taxon>Chordata</taxon>
        <taxon>Craniata</taxon>
        <taxon>Vertebrata</taxon>
        <taxon>Euteleostomi</taxon>
        <taxon>Amphibia</taxon>
        <taxon>Batrachia</taxon>
        <taxon>Anura</taxon>
        <taxon>Pipoidea</taxon>
        <taxon>Pipidae</taxon>
        <taxon>Xenopodinae</taxon>
        <taxon>Xenopus</taxon>
        <taxon>Xenopus</taxon>
    </lineage>
</organism>
<feature type="chain" id="PRO_0000370555" description="Secretory carrier-associated membrane protein 5A">
    <location>
        <begin position="1"/>
        <end position="235"/>
    </location>
</feature>
<feature type="topological domain" description="Cytoplasmic" evidence="2">
    <location>
        <begin position="1"/>
        <end position="39"/>
    </location>
</feature>
<feature type="transmembrane region" description="Helical" evidence="2">
    <location>
        <begin position="40"/>
        <end position="60"/>
    </location>
</feature>
<feature type="topological domain" description="Extracellular" evidence="2">
    <location>
        <begin position="61"/>
        <end position="67"/>
    </location>
</feature>
<feature type="transmembrane region" description="Helical" evidence="2">
    <location>
        <begin position="68"/>
        <end position="88"/>
    </location>
</feature>
<feature type="topological domain" description="Cytoplasmic" evidence="2">
    <location>
        <begin position="89"/>
        <end position="102"/>
    </location>
</feature>
<feature type="transmembrane region" description="Helical" evidence="2">
    <location>
        <begin position="103"/>
        <end position="125"/>
    </location>
</feature>
<feature type="topological domain" description="Extracellular" evidence="2">
    <location>
        <begin position="126"/>
        <end position="148"/>
    </location>
</feature>
<feature type="transmembrane region" description="Helical" evidence="2">
    <location>
        <begin position="149"/>
        <end position="169"/>
    </location>
</feature>
<feature type="topological domain" description="Cytoplasmic" evidence="2">
    <location>
        <begin position="170"/>
        <end position="235"/>
    </location>
</feature>
<dbReference type="EMBL" id="BC073233">
    <property type="protein sequence ID" value="AAH73233.1"/>
    <property type="molecule type" value="mRNA"/>
</dbReference>
<dbReference type="RefSeq" id="NP_001085710.1">
    <property type="nucleotide sequence ID" value="NM_001092241.1"/>
</dbReference>
<dbReference type="SMR" id="Q6GPA8"/>
<dbReference type="DNASU" id="444136"/>
<dbReference type="GeneID" id="444136"/>
<dbReference type="KEGG" id="xla:444136"/>
<dbReference type="AGR" id="Xenbase:XB-GENE-5960142"/>
<dbReference type="CTD" id="444136"/>
<dbReference type="Xenbase" id="XB-GENE-5960142">
    <property type="gene designation" value="scamp5.2.S"/>
</dbReference>
<dbReference type="OMA" id="VQFFVFY"/>
<dbReference type="OrthoDB" id="242866at2759"/>
<dbReference type="Proteomes" id="UP000186698">
    <property type="component" value="Chromosome 3S"/>
</dbReference>
<dbReference type="Bgee" id="444136">
    <property type="expression patterns" value="Expressed in brain and 17 other cell types or tissues"/>
</dbReference>
<dbReference type="GO" id="GO:0000139">
    <property type="term" value="C:Golgi membrane"/>
    <property type="evidence" value="ECO:0000250"/>
    <property type="project" value="UniProtKB"/>
</dbReference>
<dbReference type="GO" id="GO:0005886">
    <property type="term" value="C:plasma membrane"/>
    <property type="evidence" value="ECO:0000250"/>
    <property type="project" value="UniProtKB"/>
</dbReference>
<dbReference type="GO" id="GO:0055038">
    <property type="term" value="C:recycling endosome membrane"/>
    <property type="evidence" value="ECO:0000318"/>
    <property type="project" value="GO_Central"/>
</dbReference>
<dbReference type="GO" id="GO:0030672">
    <property type="term" value="C:synaptic vesicle membrane"/>
    <property type="evidence" value="ECO:0007669"/>
    <property type="project" value="UniProtKB-SubCell"/>
</dbReference>
<dbReference type="GO" id="GO:0032588">
    <property type="term" value="C:trans-Golgi network membrane"/>
    <property type="evidence" value="ECO:0000318"/>
    <property type="project" value="GO_Central"/>
</dbReference>
<dbReference type="GO" id="GO:0006887">
    <property type="term" value="P:exocytosis"/>
    <property type="evidence" value="ECO:0007669"/>
    <property type="project" value="UniProtKB-KW"/>
</dbReference>
<dbReference type="GO" id="GO:0045956">
    <property type="term" value="P:positive regulation of calcium ion-dependent exocytosis"/>
    <property type="evidence" value="ECO:0000250"/>
    <property type="project" value="UniProtKB"/>
</dbReference>
<dbReference type="GO" id="GO:0001819">
    <property type="term" value="P:positive regulation of cytokine production"/>
    <property type="evidence" value="ECO:0000250"/>
    <property type="project" value="UniProtKB"/>
</dbReference>
<dbReference type="GO" id="GO:0015031">
    <property type="term" value="P:protein transport"/>
    <property type="evidence" value="ECO:0000318"/>
    <property type="project" value="GO_Central"/>
</dbReference>
<dbReference type="InterPro" id="IPR007273">
    <property type="entry name" value="SCAMP"/>
</dbReference>
<dbReference type="PANTHER" id="PTHR10687:SF93">
    <property type="entry name" value="SECRETORY CARRIER-ASSOCIATED MEMBRANE PROTEIN 5A"/>
    <property type="match status" value="1"/>
</dbReference>
<dbReference type="PANTHER" id="PTHR10687">
    <property type="entry name" value="SECRETORY CARRIER-ASSOCIATED MEMBRANE PROTEIN SCAMP"/>
    <property type="match status" value="1"/>
</dbReference>
<dbReference type="Pfam" id="PF04144">
    <property type="entry name" value="SCAMP"/>
    <property type="match status" value="1"/>
</dbReference>
<proteinExistence type="evidence at transcript level"/>
<comment type="function">
    <text evidence="1">Required for the calcium-dependent exocytosis of signal sequence-containing cytokines. Probably acts in cooperation with the SNARE machinery (By similarity).</text>
</comment>
<comment type="subcellular location">
    <subcellularLocation>
        <location evidence="1">Cell membrane</location>
        <topology evidence="1">Multi-pass membrane protein</topology>
    </subcellularLocation>
    <subcellularLocation>
        <location evidence="1">Golgi apparatus membrane</location>
        <topology evidence="1">Multi-pass membrane protein</topology>
    </subcellularLocation>
    <subcellularLocation>
        <location evidence="1">Golgi apparatus</location>
        <location evidence="1">trans-Golgi network membrane</location>
        <topology evidence="1">Multi-pass membrane protein</topology>
    </subcellularLocation>
    <subcellularLocation>
        <location evidence="1">Recycling endosome membrane</location>
        <topology evidence="1">Multi-pass membrane protein</topology>
    </subcellularLocation>
    <subcellularLocation>
        <location evidence="1">Cytoplasmic vesicle</location>
        <location evidence="1">Secretory vesicle</location>
        <location evidence="1">Synaptic vesicle membrane</location>
        <topology evidence="1">Multi-pass membrane protein</topology>
    </subcellularLocation>
    <text evidence="1">Mainly localizes in Golgi apparatus membrane. Upon calcium-triggered exocytosis, it translocates to the cell membrane. Highly enriched in synaptic vesicles (By similarity).</text>
</comment>
<comment type="similarity">
    <text evidence="3">Belongs to the SCAMP family. SCAMP5 subfamily.</text>
</comment>
<reference key="1">
    <citation type="submission" date="2004-06" db="EMBL/GenBank/DDBJ databases">
        <authorList>
            <consortium name="NIH - Xenopus Gene Collection (XGC) project"/>
        </authorList>
    </citation>
    <scope>NUCLEOTIDE SEQUENCE [LARGE SCALE MRNA]</scope>
    <source>
        <tissue>Embryo</tissue>
    </source>
</reference>
<sequence>MSDKPNNFPPLPRFIPLKPCFYQDFDTDIPDLHRTTAKRLYYLWMLNSITLGVNLIGCLAWLIGGGSATNFGLAFLWLILFTPCSYVCWFRPIYKAFKTDSSFNFMAFFFTFTAQLVISIIQAVGIPGWGVCGWIASISFFGTNVGSAVVMLIPTIMFTAVAVLSFVALTKVHRFYRGAGGSLSKAQEEWTTGAWKNPHVQQAAQNAAFGATQGAMTQNEPQYSATPNYGYSNEM</sequence>